<feature type="chain" id="PRO_0000092323" description="Ribosome protection protein VmlR">
    <location>
        <begin position="1"/>
        <end position="547"/>
    </location>
</feature>
<feature type="domain" description="ABC transporter 1" evidence="1">
    <location>
        <begin position="5"/>
        <end position="200"/>
    </location>
</feature>
<feature type="domain" description="ABC transporter 2" evidence="1">
    <location>
        <begin position="292"/>
        <end position="504"/>
    </location>
</feature>
<feature type="region of interest" description="Antibiotic resistance domain (ARD)" evidence="1 3">
    <location>
        <begin position="183"/>
        <end position="289"/>
    </location>
</feature>
<feature type="region of interest" description="C-terminal extension (CTE)" evidence="1 3">
    <location>
        <begin position="483"/>
        <end position="547"/>
    </location>
</feature>
<feature type="coiled-coil region" evidence="1">
    <location>
        <begin position="193"/>
        <end position="222"/>
    </location>
</feature>
<feature type="coiled-coil region" evidence="1">
    <location>
        <begin position="245"/>
        <end position="269"/>
    </location>
</feature>
<feature type="coiled-coil region" evidence="1">
    <location>
        <begin position="488"/>
        <end position="543"/>
    </location>
</feature>
<feature type="binding site" evidence="1">
    <location>
        <begin position="37"/>
        <end position="44"/>
    </location>
    <ligand>
        <name>ATP</name>
        <dbReference type="ChEBI" id="CHEBI:30616"/>
        <label>1</label>
    </ligand>
</feature>
<feature type="binding site" evidence="1">
    <location>
        <begin position="324"/>
        <end position="331"/>
    </location>
    <ligand>
        <name>ATP</name>
        <dbReference type="ChEBI" id="CHEBI:30616"/>
        <label>2</label>
    </ligand>
</feature>
<feature type="mutagenesis site" description="Probably has no ATPase activity, does not confer lincomycin resistance, cells enter stationary phase at lower cell density, almost all protein is bound to ribosomes; when associated with Q-432 (called EQ2). Used for electron microscopy." evidence="3 4">
    <original>E</original>
    <variation>Q</variation>
    <location>
        <position position="129"/>
    </location>
</feature>
<feature type="mutagenesis site" description="No longer confers resistance to virginiamycin M, still confers resistance to lincomycin and tiamycin." evidence="3">
    <original>F</original>
    <variation>A</variation>
    <location>
        <position position="237"/>
    </location>
</feature>
<feature type="mutagenesis site" description="Still confers resistance to virginiamycin M, lincomycin and tiamycin." evidence="3">
    <original>F</original>
    <variation>V</variation>
    <location>
        <position position="237"/>
    </location>
</feature>
<feature type="mutagenesis site" description="Probably has no ATPase activity, does not confer lincomycin resistance, cells enter stationary phase at lower cell density, almost all protein is bound to ribosomes; when associated with Q-129 (called EQ2). Used for electron microscopy." evidence="3 4">
    <original>E</original>
    <variation>Q</variation>
    <location>
        <position position="432"/>
    </location>
</feature>
<feature type="mutagenesis site" description="No longer confers resistance to virginiamycin M." evidence="3">
    <location>
        <begin position="492"/>
        <end position="547"/>
    </location>
</feature>
<organism>
    <name type="scientific">Bacillus subtilis (strain 168)</name>
    <dbReference type="NCBI Taxonomy" id="224308"/>
    <lineage>
        <taxon>Bacteria</taxon>
        <taxon>Bacillati</taxon>
        <taxon>Bacillota</taxon>
        <taxon>Bacilli</taxon>
        <taxon>Bacillales</taxon>
        <taxon>Bacillaceae</taxon>
        <taxon>Bacillus</taxon>
    </lineage>
</organism>
<gene>
    <name evidence="1 5" type="primary">vmlR</name>
    <name evidence="8" type="synonym">expZ</name>
    <name type="ordered locus">BSU05610</name>
</gene>
<evidence type="ECO:0000255" key="1">
    <source>
        <dbReference type="HAMAP-Rule" id="MF_00846"/>
    </source>
</evidence>
<evidence type="ECO:0000269" key="2">
    <source>
    </source>
</evidence>
<evidence type="ECO:0000269" key="3">
    <source>
    </source>
</evidence>
<evidence type="ECO:0000269" key="4">
    <source>
    </source>
</evidence>
<evidence type="ECO:0000303" key="5">
    <source>
    </source>
</evidence>
<evidence type="ECO:0000303" key="6">
    <source>
    </source>
</evidence>
<evidence type="ECO:0000303" key="7">
    <source>
    </source>
</evidence>
<evidence type="ECO:0000303" key="8">
    <source ref="3"/>
</evidence>
<evidence type="ECO:0007744" key="9">
    <source>
        <dbReference type="PDB" id="6HA8"/>
    </source>
</evidence>
<keyword id="KW-0002">3D-structure</keyword>
<keyword id="KW-0046">Antibiotic resistance</keyword>
<keyword id="KW-0067">ATP-binding</keyword>
<keyword id="KW-0175">Coiled coil</keyword>
<keyword id="KW-0963">Cytoplasm</keyword>
<keyword id="KW-0547">Nucleotide-binding</keyword>
<keyword id="KW-1185">Reference proteome</keyword>
<keyword id="KW-0677">Repeat</keyword>
<keyword id="KW-0694">RNA-binding</keyword>
<keyword id="KW-0699">rRNA-binding</keyword>
<keyword id="KW-0820">tRNA-binding</keyword>
<dbReference type="EMBL" id="AB001488">
    <property type="protein sequence ID" value="BAA19394.1"/>
    <property type="molecule type" value="Genomic_DNA"/>
</dbReference>
<dbReference type="EMBL" id="AL009126">
    <property type="protein sequence ID" value="CAB12368.1"/>
    <property type="molecule type" value="Genomic_DNA"/>
</dbReference>
<dbReference type="EMBL" id="X79387">
    <property type="protein sequence ID" value="CAA55930.1"/>
    <property type="molecule type" value="Genomic_DNA"/>
</dbReference>
<dbReference type="PIR" id="G69620">
    <property type="entry name" value="G69620"/>
</dbReference>
<dbReference type="RefSeq" id="NP_388442.1">
    <property type="nucleotide sequence ID" value="NC_000964.3"/>
</dbReference>
<dbReference type="RefSeq" id="WP_003234144.1">
    <property type="nucleotide sequence ID" value="NZ_OZ025638.1"/>
</dbReference>
<dbReference type="PDB" id="6HA8">
    <property type="method" value="EM"/>
    <property type="resolution" value="3.50 A"/>
    <property type="chains" value="V=2-485"/>
</dbReference>
<dbReference type="PDBsum" id="6HA8"/>
<dbReference type="SMR" id="P39115"/>
<dbReference type="FunCoup" id="P39115">
    <property type="interactions" value="180"/>
</dbReference>
<dbReference type="STRING" id="224308.BSU05610"/>
<dbReference type="CARD" id="ARO:3004476">
    <property type="molecule name" value="vmlR"/>
    <property type="mechanism identifier" value="ARO:0001003"/>
    <property type="mechanism name" value="antibiotic target protection"/>
</dbReference>
<dbReference type="TCDB" id="3.A.1.121.3">
    <property type="family name" value="the atp-binding cassette (abc) superfamily"/>
</dbReference>
<dbReference type="PaxDb" id="224308-BSU05610"/>
<dbReference type="EnsemblBacteria" id="CAB12368">
    <property type="protein sequence ID" value="CAB12368"/>
    <property type="gene ID" value="BSU_05610"/>
</dbReference>
<dbReference type="GeneID" id="938053"/>
<dbReference type="KEGG" id="bsu:BSU05610"/>
<dbReference type="PATRIC" id="fig|224308.179.peg.603"/>
<dbReference type="eggNOG" id="COG0488">
    <property type="taxonomic scope" value="Bacteria"/>
</dbReference>
<dbReference type="InParanoid" id="P39115"/>
<dbReference type="OrthoDB" id="9760950at2"/>
<dbReference type="PhylomeDB" id="P39115"/>
<dbReference type="BioCyc" id="BSUB:BSU05610-MONOMER"/>
<dbReference type="Proteomes" id="UP000001570">
    <property type="component" value="Chromosome"/>
</dbReference>
<dbReference type="GO" id="GO:0005737">
    <property type="term" value="C:cytoplasm"/>
    <property type="evidence" value="ECO:0000314"/>
    <property type="project" value="UniProtKB"/>
</dbReference>
<dbReference type="GO" id="GO:0005524">
    <property type="term" value="F:ATP binding"/>
    <property type="evidence" value="ECO:0000314"/>
    <property type="project" value="UniProtKB"/>
</dbReference>
<dbReference type="GO" id="GO:0016887">
    <property type="term" value="F:ATP hydrolysis activity"/>
    <property type="evidence" value="ECO:0007669"/>
    <property type="project" value="InterPro"/>
</dbReference>
<dbReference type="GO" id="GO:0019843">
    <property type="term" value="F:rRNA binding"/>
    <property type="evidence" value="ECO:0000314"/>
    <property type="project" value="UniProtKB"/>
</dbReference>
<dbReference type="GO" id="GO:0000049">
    <property type="term" value="F:tRNA binding"/>
    <property type="evidence" value="ECO:0000314"/>
    <property type="project" value="UniProtKB"/>
</dbReference>
<dbReference type="GO" id="GO:0072344">
    <property type="term" value="P:rescue of stalled ribosome"/>
    <property type="evidence" value="ECO:0000314"/>
    <property type="project" value="UniProtKB"/>
</dbReference>
<dbReference type="GO" id="GO:0046677">
    <property type="term" value="P:response to antibiotic"/>
    <property type="evidence" value="ECO:0000314"/>
    <property type="project" value="UniProtKB"/>
</dbReference>
<dbReference type="CDD" id="cd03221">
    <property type="entry name" value="ABCF_EF-3"/>
    <property type="match status" value="2"/>
</dbReference>
<dbReference type="FunFam" id="3.40.50.300:FF:000309">
    <property type="entry name" value="ABC transporter ATP-binding protein"/>
    <property type="match status" value="1"/>
</dbReference>
<dbReference type="FunFam" id="3.40.50.300:FF:001634">
    <property type="entry name" value="ABC transporter ATP-binding protein"/>
    <property type="match status" value="1"/>
</dbReference>
<dbReference type="Gene3D" id="3.40.50.300">
    <property type="entry name" value="P-loop containing nucleotide triphosphate hydrolases"/>
    <property type="match status" value="3"/>
</dbReference>
<dbReference type="HAMAP" id="MF_00846">
    <property type="entry name" value="VmlR"/>
    <property type="match status" value="1"/>
</dbReference>
<dbReference type="InterPro" id="IPR003593">
    <property type="entry name" value="AAA+_ATPase"/>
</dbReference>
<dbReference type="InterPro" id="IPR032781">
    <property type="entry name" value="ABC_tran_Xtn"/>
</dbReference>
<dbReference type="InterPro" id="IPR003439">
    <property type="entry name" value="ABC_transporter-like_ATP-bd"/>
</dbReference>
<dbReference type="InterPro" id="IPR050611">
    <property type="entry name" value="ABCF_EF3_subfamily"/>
</dbReference>
<dbReference type="InterPro" id="IPR027417">
    <property type="entry name" value="P-loop_NTPase"/>
</dbReference>
<dbReference type="InterPro" id="IPR043684">
    <property type="entry name" value="VmlR"/>
</dbReference>
<dbReference type="NCBIfam" id="NF000355">
    <property type="entry name" value="ribo_prot_ABC_F"/>
    <property type="match status" value="1"/>
</dbReference>
<dbReference type="PANTHER" id="PTHR19211:SF14">
    <property type="entry name" value="ATP-BINDING CASSETTE SUB-FAMILY F MEMBER 1"/>
    <property type="match status" value="1"/>
</dbReference>
<dbReference type="PANTHER" id="PTHR19211">
    <property type="entry name" value="ATP-BINDING TRANSPORT PROTEIN-RELATED"/>
    <property type="match status" value="1"/>
</dbReference>
<dbReference type="Pfam" id="PF00005">
    <property type="entry name" value="ABC_tran"/>
    <property type="match status" value="2"/>
</dbReference>
<dbReference type="Pfam" id="PF12848">
    <property type="entry name" value="ABC_tran_Xtn"/>
    <property type="match status" value="1"/>
</dbReference>
<dbReference type="SMART" id="SM00382">
    <property type="entry name" value="AAA"/>
    <property type="match status" value="2"/>
</dbReference>
<dbReference type="SUPFAM" id="SSF52540">
    <property type="entry name" value="P-loop containing nucleoside triphosphate hydrolases"/>
    <property type="match status" value="2"/>
</dbReference>
<dbReference type="PROSITE" id="PS50893">
    <property type="entry name" value="ABC_TRANSPORTER_2"/>
    <property type="match status" value="2"/>
</dbReference>
<name>VMLR_BACSU</name>
<sequence>MKEIVTLTNVSYEVKDQTVFKHVNASVQQGDIIGIIGKNGAGKSTLLHLIHNDLAPAQGQILRKDIKLALVEQETAAYSFADQTPAEKKLLEKWHVPLRDFHQLSGGEKLKARLAKGLSEDADLLLLDEPTNHLDEKSLQFLIQQLKHYNGTVILVSHDRYFLDEAATKIWSLEDQTLIEFKGNYSGYMKFREKKRLTQQREYEKQQKMVERIEAQMNGLASWSEKAHAQSTKKEGFKEYHRVKAKRTDAQIKSKQKRLEKELEKAKAEPVTPEYTVRFSIDTTHKTGKRFLEVQNVTKAFGERTLFKNANFTIQHGEKVAIIGPNGSGKTTLLNIILGQETAEGSVWVSPSANIGYLTQEVFDLPLEQTPEELFENETFKARGHVQNLMRHLGFTAAQWTEPIKHMSMGERVKIKLMAYILEEKDVLILDEPTNHLDLPSREQLEETLSQYSGTLLAVSHDRYFLEKTTNSKLVISNNGIEKQLNDVPSERNEREELRLKLETERQEVLGKLSFMTPNDKGYKELDQAFNELTKRIKELDHQDKKD</sequence>
<comment type="function">
    <text evidence="2 3">Recognizes and binds in the vacant E-site of ribosomes stalled by some peptidyltransferase center (PTC)-targeting antibiotics. Makes contact with the PTC and both ribosomal subunits. Induces conformational changes in the P-site, which allows it to dislodge the antibiotic from its PTC binding site. Binds to ribosomes either directly following translation initation or subsequent to E tRNA release during elongation (PubMed:30126986). Involved in resistance to a narrow spectrum of antibiotics (the streptogramin A antibiotic virginiamycin M, the lincosamide antibiotic lincomycin and the pleuromutilin antibiotic tiamulin) (PubMed:16109936, PubMed:30126986).</text>
</comment>
<comment type="subunit">
    <text evidence="3">Binds within the E-site of the 70S ribosome, where it contacts ribosomal proteins L1, L5, L33-1, S7, S11, the 16 and 23S rRNAs and the acceptor arm of the P-site tRNA.</text>
</comment>
<comment type="subcellular location">
    <subcellularLocation>
        <location evidence="1 4">Cytoplasm</location>
    </subcellularLocation>
    <text evidence="1 4">Does not stably associate with ribosomes.</text>
</comment>
<comment type="induction">
    <text evidence="2">Expressed during all growth phases; expression is higher during early log phase and decreases as growth continues. Expression is dramatically increased in the presence of antibiotics virginiamycin M and lincomycin. A monocistronic operon.</text>
</comment>
<comment type="domain">
    <text evidence="1 3">The antibiotic resistance domain (ARD) is packed between the 23S rRNA and the acceptor arm of the P-site tRNA and inserts into the peptidyltransferase center (PTC). The C-terminal extension (CTE) contacts the small ribosomal subunit, positioned in the Shine-Dalgarno-anti-Shine-Dalgarno cavity.</text>
</comment>
<comment type="disruption phenotype">
    <text evidence="2 3">Hypersensitivity toward the antibiotics virginiamycin M and lincomycin, mildly increased sensitivity to erythromycin, clindamycin and oleandomycin (PubMed:16109936). Hypersensitivity toward the antibiotics virginiamycin M, lincomycin and tiamulin, in this study has no effect on sensitivity to erythromycin, chloramphenicol or linezolid (PubMed:30126986).</text>
</comment>
<comment type="similarity">
    <text evidence="1 6 7">Belongs to the ABC transporter superfamily. ABCF family. ARE2 subfamily.</text>
</comment>
<accession>P39115</accession>
<reference key="1">
    <citation type="submission" date="1997-03" db="EMBL/GenBank/DDBJ databases">
        <title>A 148 kbp sequence of the region between 35 and 47 degree of the Bacillus subtilis genome.</title>
        <authorList>
            <person name="Kasahara Y."/>
            <person name="Nakai S."/>
            <person name="Lee S."/>
            <person name="Sadaie Y."/>
            <person name="Ogasawara N."/>
        </authorList>
    </citation>
    <scope>NUCLEOTIDE SEQUENCE [GENOMIC DNA]</scope>
    <source>
        <strain>168</strain>
    </source>
</reference>
<reference key="2">
    <citation type="journal article" date="1997" name="Nature">
        <title>The complete genome sequence of the Gram-positive bacterium Bacillus subtilis.</title>
        <authorList>
            <person name="Kunst F."/>
            <person name="Ogasawara N."/>
            <person name="Moszer I."/>
            <person name="Albertini A.M."/>
            <person name="Alloni G."/>
            <person name="Azevedo V."/>
            <person name="Bertero M.G."/>
            <person name="Bessieres P."/>
            <person name="Bolotin A."/>
            <person name="Borchert S."/>
            <person name="Borriss R."/>
            <person name="Boursier L."/>
            <person name="Brans A."/>
            <person name="Braun M."/>
            <person name="Brignell S.C."/>
            <person name="Bron S."/>
            <person name="Brouillet S."/>
            <person name="Bruschi C.V."/>
            <person name="Caldwell B."/>
            <person name="Capuano V."/>
            <person name="Carter N.M."/>
            <person name="Choi S.-K."/>
            <person name="Codani J.-J."/>
            <person name="Connerton I.F."/>
            <person name="Cummings N.J."/>
            <person name="Daniel R.A."/>
            <person name="Denizot F."/>
            <person name="Devine K.M."/>
            <person name="Duesterhoeft A."/>
            <person name="Ehrlich S.D."/>
            <person name="Emmerson P.T."/>
            <person name="Entian K.-D."/>
            <person name="Errington J."/>
            <person name="Fabret C."/>
            <person name="Ferrari E."/>
            <person name="Foulger D."/>
            <person name="Fritz C."/>
            <person name="Fujita M."/>
            <person name="Fujita Y."/>
            <person name="Fuma S."/>
            <person name="Galizzi A."/>
            <person name="Galleron N."/>
            <person name="Ghim S.-Y."/>
            <person name="Glaser P."/>
            <person name="Goffeau A."/>
            <person name="Golightly E.J."/>
            <person name="Grandi G."/>
            <person name="Guiseppi G."/>
            <person name="Guy B.J."/>
            <person name="Haga K."/>
            <person name="Haiech J."/>
            <person name="Harwood C.R."/>
            <person name="Henaut A."/>
            <person name="Hilbert H."/>
            <person name="Holsappel S."/>
            <person name="Hosono S."/>
            <person name="Hullo M.-F."/>
            <person name="Itaya M."/>
            <person name="Jones L.-M."/>
            <person name="Joris B."/>
            <person name="Karamata D."/>
            <person name="Kasahara Y."/>
            <person name="Klaerr-Blanchard M."/>
            <person name="Klein C."/>
            <person name="Kobayashi Y."/>
            <person name="Koetter P."/>
            <person name="Koningstein G."/>
            <person name="Krogh S."/>
            <person name="Kumano M."/>
            <person name="Kurita K."/>
            <person name="Lapidus A."/>
            <person name="Lardinois S."/>
            <person name="Lauber J."/>
            <person name="Lazarevic V."/>
            <person name="Lee S.-M."/>
            <person name="Levine A."/>
            <person name="Liu H."/>
            <person name="Masuda S."/>
            <person name="Mauel C."/>
            <person name="Medigue C."/>
            <person name="Medina N."/>
            <person name="Mellado R.P."/>
            <person name="Mizuno M."/>
            <person name="Moestl D."/>
            <person name="Nakai S."/>
            <person name="Noback M."/>
            <person name="Noone D."/>
            <person name="O'Reilly M."/>
            <person name="Ogawa K."/>
            <person name="Ogiwara A."/>
            <person name="Oudega B."/>
            <person name="Park S.-H."/>
            <person name="Parro V."/>
            <person name="Pohl T.M."/>
            <person name="Portetelle D."/>
            <person name="Porwollik S."/>
            <person name="Prescott A.M."/>
            <person name="Presecan E."/>
            <person name="Pujic P."/>
            <person name="Purnelle B."/>
            <person name="Rapoport G."/>
            <person name="Rey M."/>
            <person name="Reynolds S."/>
            <person name="Rieger M."/>
            <person name="Rivolta C."/>
            <person name="Rocha E."/>
            <person name="Roche B."/>
            <person name="Rose M."/>
            <person name="Sadaie Y."/>
            <person name="Sato T."/>
            <person name="Scanlan E."/>
            <person name="Schleich S."/>
            <person name="Schroeter R."/>
            <person name="Scoffone F."/>
            <person name="Sekiguchi J."/>
            <person name="Sekowska A."/>
            <person name="Seror S.J."/>
            <person name="Serror P."/>
            <person name="Shin B.-S."/>
            <person name="Soldo B."/>
            <person name="Sorokin A."/>
            <person name="Tacconi E."/>
            <person name="Takagi T."/>
            <person name="Takahashi H."/>
            <person name="Takemaru K."/>
            <person name="Takeuchi M."/>
            <person name="Tamakoshi A."/>
            <person name="Tanaka T."/>
            <person name="Terpstra P."/>
            <person name="Tognoni A."/>
            <person name="Tosato V."/>
            <person name="Uchiyama S."/>
            <person name="Vandenbol M."/>
            <person name="Vannier F."/>
            <person name="Vassarotti A."/>
            <person name="Viari A."/>
            <person name="Wambutt R."/>
            <person name="Wedler E."/>
            <person name="Wedler H."/>
            <person name="Weitzenegger T."/>
            <person name="Winters P."/>
            <person name="Wipat A."/>
            <person name="Yamamoto H."/>
            <person name="Yamane K."/>
            <person name="Yasumoto K."/>
            <person name="Yata K."/>
            <person name="Yoshida K."/>
            <person name="Yoshikawa H.-F."/>
            <person name="Zumstein E."/>
            <person name="Yoshikawa H."/>
            <person name="Danchin A."/>
        </authorList>
    </citation>
    <scope>NUCLEOTIDE SEQUENCE [LARGE SCALE GENOMIC DNA]</scope>
    <source>
        <strain>168</strain>
    </source>
</reference>
<reference key="3">
    <citation type="submission" date="1994-05" db="EMBL/GenBank/DDBJ databases">
        <authorList>
            <person name="Deutscher J."/>
            <person name="Bergstedt U."/>
            <person name="Bourson C."/>
            <person name="Panayotova-Heiermann M."/>
        </authorList>
    </citation>
    <scope>NUCLEOTIDE SEQUENCE [GENOMIC DNA] OF 123-547</scope>
    <source>
        <strain>168 / GM122</strain>
    </source>
</reference>
<reference key="4">
    <citation type="journal article" date="2005" name="J. Bacteriol.">
        <title>Transcriptional termination control of a novel ABC transporter gene involved in antibiotic resistance in Bacillus subtilis.</title>
        <authorList>
            <person name="Ohki R."/>
            <person name="Tateno K."/>
            <person name="Takizawa T."/>
            <person name="Aiso T."/>
            <person name="Murata M."/>
        </authorList>
    </citation>
    <scope>FUNCTION</scope>
    <scope>INDUCTION BY ANTIBIOTICS VIRGINIAMYCIN M AND LINCOMYCIN</scope>
    <scope>OPERON</scope>
    <scope>DISRUPTION PHENOTYPE</scope>
    <source>
        <strain>168</strain>
    </source>
</reference>
<reference key="5">
    <citation type="journal article" date="2019" name="J. Mol. Biol.">
        <title>ABCF ATPases involved in protein synthesis, ribosome assembly and antibiotic resistance: structural and functional diversification across the tree of life.</title>
        <authorList>
            <person name="Murina V."/>
            <person name="Kasari M."/>
            <person name="Takada H."/>
            <person name="Hinnu M."/>
            <person name="Saha C.K."/>
            <person name="Grimshaw J.W."/>
            <person name="Seki T."/>
            <person name="Reith M."/>
            <person name="Putrins M."/>
            <person name="Tenson T."/>
            <person name="Strahl H."/>
            <person name="Hauryliuk V."/>
            <person name="Atkinson G.C."/>
        </authorList>
    </citation>
    <scope>SUBCELLULAR LOCATION</scope>
    <scope>DISRUPTION PHENOTYPE</scope>
    <scope>FAMILY</scope>
    <scope>MUTAGENESIS OF GLU-129 AND GLU-432</scope>
    <source>
        <strain>168</strain>
    </source>
</reference>
<reference evidence="9" key="6">
    <citation type="journal article" date="2018" name="Proc. Natl. Acad. Sci. U.S.A.">
        <title>Structural basis for antibiotic resistance mediated by the Bacillus subtilis ABCF ATPase VmlR.</title>
        <authorList>
            <person name="Crowe-McAuliffe C."/>
            <person name="Graf M."/>
            <person name="Huter P."/>
            <person name="Takada H."/>
            <person name="Abdelshahid M."/>
            <person name="Novacek J."/>
            <person name="Murina V."/>
            <person name="Atkinson G.C."/>
            <person name="Hauryliuk V."/>
            <person name="Wilson D.N."/>
        </authorList>
    </citation>
    <scope>STRUCTURE BY ELECTRON MICROSCOPY (3.50 ANGSTROMS) OF 2-485 WITH VIRGINIAMYCIN M IN COMPLEX WITH 70S RIBOSOMES</scope>
    <scope>FUNCTION</scope>
    <scope>REACTION MECHANISM</scope>
    <scope>INTERACTION WITH RIBOSOMAL PROTEINS L1; L5; L33-1; S7 AND S11</scope>
    <scope>SUBUNIT</scope>
    <scope>DOMAIN</scope>
    <scope>DISRUPTION PHENOTYPE</scope>
    <scope>MUTAGENESIS OF GLU-129; PHE-237; GLU-432 AND 492-ARG--ASP-547</scope>
    <scope>ATP-BINDING</scope>
    <scope>RRNA-BINDING</scope>
    <scope>TRNA-BINDING</scope>
    <source>
        <strain>168</strain>
    </source>
</reference>
<proteinExistence type="evidence at protein level"/>
<protein>
    <recommendedName>
        <fullName evidence="1 6">Ribosome protection protein VmlR</fullName>
    </recommendedName>
    <alternativeName>
        <fullName evidence="5">Multidrug resistance system ATP-binding protein VmlR</fullName>
    </alternativeName>
</protein>